<protein>
    <recommendedName>
        <fullName>Ribonuclease 3</fullName>
        <ecNumber>3.1.26.3</ecNumber>
    </recommendedName>
    <alternativeName>
        <fullName>Ribonuclease III</fullName>
        <shortName>RNase III</shortName>
    </alternativeName>
</protein>
<comment type="function">
    <text evidence="6 8">Digests double-stranded RNA. Involved in the processing of primary rRNA transcript to yield the immediate precursors to the large and small rRNAs (23S and 16S). Also processes some mRNAs, and tRNAs when they are encoded in the rRNA operon. Probably processes pre-crRNA and tracrRNA of type II CRISPR loci if present in the organism.</text>
</comment>
<comment type="catalytic activity">
    <reaction>
        <text>Endonucleolytic cleavage to 5'-phosphomonoester.</text>
        <dbReference type="EC" id="3.1.26.3"/>
    </reaction>
</comment>
<comment type="cofactor">
    <cofactor evidence="3 4 6 7 8">
        <name>Mg(2+)</name>
        <dbReference type="ChEBI" id="CHEBI:18420"/>
    </cofactor>
    <text evidence="3 4 6 7 8">Binds 2 Mg(2+) per subunit. Mn(2+) also supports catalytic activity.</text>
</comment>
<comment type="biophysicochemical properties">
    <kinetics>
        <KM evidence="8">98 nM for 16S-u-hp RNA</KM>
    </kinetics>
    <phDependence>
        <text evidence="8">Optimum pH is 8-9.</text>
    </phDependence>
    <temperatureDependence>
        <text evidence="8">Optimum temperature is 70-85 degrees Celsius.</text>
    </temperatureDependence>
</comment>
<comment type="subunit">
    <text evidence="3 4 5 6 7">Homodimer.</text>
</comment>
<comment type="interaction">
    <interactant intactId="EBI-15529943">
        <id>O67082</id>
    </interactant>
    <interactant intactId="EBI-15529943">
        <id>O67082</id>
        <label>rnc</label>
    </interactant>
    <organismsDiffer>false</organismsDiffer>
    <experiments>2</experiments>
</comment>
<comment type="subcellular location">
    <subcellularLocation>
        <location evidence="1">Cytoplasm</location>
    </subcellularLocation>
</comment>
<comment type="similarity">
    <text evidence="9">Belongs to the ribonuclease III family.</text>
</comment>
<dbReference type="EC" id="3.1.26.3"/>
<dbReference type="EMBL" id="AE000657">
    <property type="protein sequence ID" value="AAC07049.1"/>
    <property type="molecule type" value="Genomic_DNA"/>
</dbReference>
<dbReference type="PIR" id="G70381">
    <property type="entry name" value="G70381"/>
</dbReference>
<dbReference type="RefSeq" id="NP_213645.1">
    <property type="nucleotide sequence ID" value="NC_000918.1"/>
</dbReference>
<dbReference type="RefSeq" id="WP_010880583.1">
    <property type="nucleotide sequence ID" value="NC_000918.1"/>
</dbReference>
<dbReference type="PDB" id="1I4S">
    <property type="method" value="X-ray"/>
    <property type="resolution" value="2.15 A"/>
    <property type="chains" value="A/B=1-147"/>
</dbReference>
<dbReference type="PDB" id="1JFZ">
    <property type="method" value="X-ray"/>
    <property type="resolution" value="2.10 A"/>
    <property type="chains" value="A/B/C/D=1-147"/>
</dbReference>
<dbReference type="PDB" id="1RC5">
    <property type="method" value="X-ray"/>
    <property type="resolution" value="2.30 A"/>
    <property type="chains" value="A/B/C/D=1-147"/>
</dbReference>
<dbReference type="PDB" id="1RC7">
    <property type="method" value="X-ray"/>
    <property type="resolution" value="2.15 A"/>
    <property type="chains" value="A=1-220"/>
</dbReference>
<dbReference type="PDB" id="1YYK">
    <property type="method" value="X-ray"/>
    <property type="resolution" value="2.50 A"/>
    <property type="chains" value="A/B=1-221"/>
</dbReference>
<dbReference type="PDB" id="1YYO">
    <property type="method" value="X-ray"/>
    <property type="resolution" value="2.90 A"/>
    <property type="chains" value="A/B=1-221"/>
</dbReference>
<dbReference type="PDB" id="1YYW">
    <property type="method" value="X-ray"/>
    <property type="resolution" value="2.80 A"/>
    <property type="chains" value="A/B/C/D=1-221"/>
</dbReference>
<dbReference type="PDB" id="1YZ9">
    <property type="method" value="X-ray"/>
    <property type="resolution" value="2.10 A"/>
    <property type="chains" value="A/B=1-221"/>
</dbReference>
<dbReference type="PDB" id="2EZ6">
    <property type="method" value="X-ray"/>
    <property type="resolution" value="2.05 A"/>
    <property type="chains" value="A/B=1-221"/>
</dbReference>
<dbReference type="PDB" id="2NUE">
    <property type="method" value="X-ray"/>
    <property type="resolution" value="2.90 A"/>
    <property type="chains" value="A/B=1-221"/>
</dbReference>
<dbReference type="PDB" id="2NUF">
    <property type="method" value="X-ray"/>
    <property type="resolution" value="2.50 A"/>
    <property type="chains" value="A/B=1-221"/>
</dbReference>
<dbReference type="PDB" id="2NUG">
    <property type="method" value="X-ray"/>
    <property type="resolution" value="1.70 A"/>
    <property type="chains" value="A/B=1-221"/>
</dbReference>
<dbReference type="PDB" id="4M2Z">
    <property type="method" value="X-ray"/>
    <property type="resolution" value="2.85 A"/>
    <property type="chains" value="A/B=1-221"/>
</dbReference>
<dbReference type="PDB" id="4M30">
    <property type="method" value="X-ray"/>
    <property type="resolution" value="2.50 A"/>
    <property type="chains" value="A/B=1-221"/>
</dbReference>
<dbReference type="PDBsum" id="1I4S"/>
<dbReference type="PDBsum" id="1JFZ"/>
<dbReference type="PDBsum" id="1RC5"/>
<dbReference type="PDBsum" id="1RC7"/>
<dbReference type="PDBsum" id="1YYK"/>
<dbReference type="PDBsum" id="1YYO"/>
<dbReference type="PDBsum" id="1YYW"/>
<dbReference type="PDBsum" id="1YZ9"/>
<dbReference type="PDBsum" id="2EZ6"/>
<dbReference type="PDBsum" id="2NUE"/>
<dbReference type="PDBsum" id="2NUF"/>
<dbReference type="PDBsum" id="2NUG"/>
<dbReference type="PDBsum" id="4M2Z"/>
<dbReference type="PDBsum" id="4M30"/>
<dbReference type="SMR" id="O67082"/>
<dbReference type="DIP" id="DIP-48455N"/>
<dbReference type="FunCoup" id="O67082">
    <property type="interactions" value="398"/>
</dbReference>
<dbReference type="STRING" id="224324.aq_946"/>
<dbReference type="EnsemblBacteria" id="AAC07049">
    <property type="protein sequence ID" value="AAC07049"/>
    <property type="gene ID" value="aq_946"/>
</dbReference>
<dbReference type="KEGG" id="aae:aq_946"/>
<dbReference type="PATRIC" id="fig|224324.8.peg.743"/>
<dbReference type="eggNOG" id="COG0571">
    <property type="taxonomic scope" value="Bacteria"/>
</dbReference>
<dbReference type="HOGENOM" id="CLU_000907_1_3_0"/>
<dbReference type="InParanoid" id="O67082"/>
<dbReference type="OrthoDB" id="9805026at2"/>
<dbReference type="BRENDA" id="3.1.26.3">
    <property type="organism ID" value="396"/>
</dbReference>
<dbReference type="EvolutionaryTrace" id="O67082"/>
<dbReference type="Proteomes" id="UP000000798">
    <property type="component" value="Chromosome"/>
</dbReference>
<dbReference type="GO" id="GO:0005829">
    <property type="term" value="C:cytosol"/>
    <property type="evidence" value="ECO:0000318"/>
    <property type="project" value="GO_Central"/>
</dbReference>
<dbReference type="GO" id="GO:0003725">
    <property type="term" value="F:double-stranded RNA binding"/>
    <property type="evidence" value="ECO:0000318"/>
    <property type="project" value="GO_Central"/>
</dbReference>
<dbReference type="GO" id="GO:0042802">
    <property type="term" value="F:identical protein binding"/>
    <property type="evidence" value="ECO:0000353"/>
    <property type="project" value="IntAct"/>
</dbReference>
<dbReference type="GO" id="GO:0046872">
    <property type="term" value="F:metal ion binding"/>
    <property type="evidence" value="ECO:0007669"/>
    <property type="project" value="UniProtKB-KW"/>
</dbReference>
<dbReference type="GO" id="GO:0004525">
    <property type="term" value="F:ribonuclease III activity"/>
    <property type="evidence" value="ECO:0000318"/>
    <property type="project" value="GO_Central"/>
</dbReference>
<dbReference type="GO" id="GO:0006397">
    <property type="term" value="P:mRNA processing"/>
    <property type="evidence" value="ECO:0007669"/>
    <property type="project" value="UniProtKB-UniRule"/>
</dbReference>
<dbReference type="GO" id="GO:0010468">
    <property type="term" value="P:regulation of gene expression"/>
    <property type="evidence" value="ECO:0000318"/>
    <property type="project" value="GO_Central"/>
</dbReference>
<dbReference type="GO" id="GO:0006396">
    <property type="term" value="P:RNA processing"/>
    <property type="evidence" value="ECO:0000318"/>
    <property type="project" value="GO_Central"/>
</dbReference>
<dbReference type="GO" id="GO:0006364">
    <property type="term" value="P:rRNA processing"/>
    <property type="evidence" value="ECO:0007669"/>
    <property type="project" value="UniProtKB-UniRule"/>
</dbReference>
<dbReference type="GO" id="GO:0008033">
    <property type="term" value="P:tRNA processing"/>
    <property type="evidence" value="ECO:0007669"/>
    <property type="project" value="UniProtKB-KW"/>
</dbReference>
<dbReference type="CDD" id="cd10845">
    <property type="entry name" value="DSRM_RNAse_III_family"/>
    <property type="match status" value="1"/>
</dbReference>
<dbReference type="CDD" id="cd00593">
    <property type="entry name" value="RIBOc"/>
    <property type="match status" value="1"/>
</dbReference>
<dbReference type="FunFam" id="1.10.1520.10:FF:000001">
    <property type="entry name" value="Ribonuclease 3"/>
    <property type="match status" value="1"/>
</dbReference>
<dbReference type="FunFam" id="3.30.160.20:FF:000003">
    <property type="entry name" value="Ribonuclease 3"/>
    <property type="match status" value="1"/>
</dbReference>
<dbReference type="Gene3D" id="3.30.160.20">
    <property type="match status" value="1"/>
</dbReference>
<dbReference type="Gene3D" id="1.10.1520.10">
    <property type="entry name" value="Ribonuclease III domain"/>
    <property type="match status" value="1"/>
</dbReference>
<dbReference type="HAMAP" id="MF_00104">
    <property type="entry name" value="RNase_III"/>
    <property type="match status" value="1"/>
</dbReference>
<dbReference type="InterPro" id="IPR014720">
    <property type="entry name" value="dsRBD_dom"/>
</dbReference>
<dbReference type="InterPro" id="IPR011907">
    <property type="entry name" value="RNase_III"/>
</dbReference>
<dbReference type="InterPro" id="IPR000999">
    <property type="entry name" value="RNase_III_dom"/>
</dbReference>
<dbReference type="InterPro" id="IPR036389">
    <property type="entry name" value="RNase_III_sf"/>
</dbReference>
<dbReference type="NCBIfam" id="TIGR02191">
    <property type="entry name" value="RNaseIII"/>
    <property type="match status" value="1"/>
</dbReference>
<dbReference type="PANTHER" id="PTHR11207:SF0">
    <property type="entry name" value="RIBONUCLEASE 3"/>
    <property type="match status" value="1"/>
</dbReference>
<dbReference type="PANTHER" id="PTHR11207">
    <property type="entry name" value="RIBONUCLEASE III"/>
    <property type="match status" value="1"/>
</dbReference>
<dbReference type="Pfam" id="PF00035">
    <property type="entry name" value="dsrm"/>
    <property type="match status" value="1"/>
</dbReference>
<dbReference type="Pfam" id="PF14622">
    <property type="entry name" value="Ribonucleas_3_3"/>
    <property type="match status" value="1"/>
</dbReference>
<dbReference type="SMART" id="SM00358">
    <property type="entry name" value="DSRM"/>
    <property type="match status" value="1"/>
</dbReference>
<dbReference type="SMART" id="SM00535">
    <property type="entry name" value="RIBOc"/>
    <property type="match status" value="1"/>
</dbReference>
<dbReference type="SUPFAM" id="SSF54768">
    <property type="entry name" value="dsRNA-binding domain-like"/>
    <property type="match status" value="1"/>
</dbReference>
<dbReference type="SUPFAM" id="SSF69065">
    <property type="entry name" value="RNase III domain-like"/>
    <property type="match status" value="1"/>
</dbReference>
<dbReference type="PROSITE" id="PS50137">
    <property type="entry name" value="DS_RBD"/>
    <property type="match status" value="1"/>
</dbReference>
<dbReference type="PROSITE" id="PS00517">
    <property type="entry name" value="RNASE_3_1"/>
    <property type="match status" value="1"/>
</dbReference>
<dbReference type="PROSITE" id="PS50142">
    <property type="entry name" value="RNASE_3_2"/>
    <property type="match status" value="1"/>
</dbReference>
<keyword id="KW-0002">3D-structure</keyword>
<keyword id="KW-0963">Cytoplasm</keyword>
<keyword id="KW-0255">Endonuclease</keyword>
<keyword id="KW-0378">Hydrolase</keyword>
<keyword id="KW-0460">Magnesium</keyword>
<keyword id="KW-0479">Metal-binding</keyword>
<keyword id="KW-0507">mRNA processing</keyword>
<keyword id="KW-0540">Nuclease</keyword>
<keyword id="KW-1185">Reference proteome</keyword>
<keyword id="KW-0694">RNA-binding</keyword>
<keyword id="KW-0698">rRNA processing</keyword>
<keyword id="KW-0819">tRNA processing</keyword>
<organism>
    <name type="scientific">Aquifex aeolicus (strain VF5)</name>
    <dbReference type="NCBI Taxonomy" id="224324"/>
    <lineage>
        <taxon>Bacteria</taxon>
        <taxon>Pseudomonadati</taxon>
        <taxon>Aquificota</taxon>
        <taxon>Aquificia</taxon>
        <taxon>Aquificales</taxon>
        <taxon>Aquificaceae</taxon>
        <taxon>Aquifex</taxon>
    </lineage>
</organism>
<accession>O67082</accession>
<gene>
    <name type="primary">rnc</name>
    <name type="ordered locus">aq_946</name>
</gene>
<evidence type="ECO:0000250" key="1"/>
<evidence type="ECO:0000255" key="2"/>
<evidence type="ECO:0000269" key="3">
    <source>
    </source>
</evidence>
<evidence type="ECO:0000269" key="4">
    <source>
    </source>
</evidence>
<evidence type="ECO:0000269" key="5">
    <source>
    </source>
</evidence>
<evidence type="ECO:0000269" key="6">
    <source>
    </source>
</evidence>
<evidence type="ECO:0000269" key="7">
    <source>
    </source>
</evidence>
<evidence type="ECO:0000269" key="8">
    <source>
    </source>
</evidence>
<evidence type="ECO:0000305" key="9"/>
<evidence type="ECO:0000305" key="10">
    <source>
    </source>
</evidence>
<evidence type="ECO:0007744" key="11">
    <source>
        <dbReference type="PDB" id="1JFZ"/>
    </source>
</evidence>
<evidence type="ECO:0007744" key="12">
    <source>
        <dbReference type="PDB" id="1RC5"/>
    </source>
</evidence>
<evidence type="ECO:0007829" key="13">
    <source>
        <dbReference type="PDB" id="1JFZ"/>
    </source>
</evidence>
<evidence type="ECO:0007829" key="14">
    <source>
        <dbReference type="PDB" id="2EZ6"/>
    </source>
</evidence>
<evidence type="ECO:0007829" key="15">
    <source>
        <dbReference type="PDB" id="2NUG"/>
    </source>
</evidence>
<sequence length="221" mass="26100">MKMLEQLEKKLGYTFKDKSLLEKALTHVSYSKKEHYETLEFLGDALVNFFIVDLLVQYSPNKREGFLSPLKAYLISEEFFNLLAQKLELHKFIRIKRGKINETIIGDVFEALWAAVYIDSGRDANFTRELFYKLFKEDILSAIKEGRVKKDYKTILQEITQKRWKERPEYRLISVEGPHHKKKFIVEAKIKEYRTLGEGKSKKEAEQRAAEELIKLLEESE</sequence>
<feature type="chain" id="PRO_0000180371" description="Ribonuclease 3">
    <location>
        <begin position="1"/>
        <end position="221"/>
    </location>
</feature>
<feature type="domain" description="RNase III">
    <location>
        <begin position="4"/>
        <end position="121"/>
    </location>
</feature>
<feature type="domain" description="DRBM">
    <location>
        <begin position="151"/>
        <end position="219"/>
    </location>
</feature>
<feature type="active site" evidence="2">
    <location>
        <position position="44"/>
    </location>
</feature>
<feature type="active site" evidence="9">
    <location>
        <position position="110"/>
    </location>
</feature>
<feature type="binding site" evidence="4 7 10 11 12">
    <location>
        <position position="40"/>
    </location>
    <ligand>
        <name>Mg(2+)</name>
        <dbReference type="ChEBI" id="CHEBI:18420"/>
    </ligand>
</feature>
<feature type="binding site" evidence="4 7 10 11 12">
    <location>
        <position position="107"/>
    </location>
    <ligand>
        <name>Mg(2+)</name>
        <dbReference type="ChEBI" id="CHEBI:18420"/>
    </ligand>
</feature>
<feature type="binding site" evidence="4 7 10 11 12">
    <location>
        <position position="110"/>
    </location>
    <ligand>
        <name>Mg(2+)</name>
        <dbReference type="ChEBI" id="CHEBI:18420"/>
    </ligand>
</feature>
<feature type="mutagenesis site" description="Very low catalytic activity, binds RNA normally." evidence="6">
    <original>D</original>
    <variation>N</variation>
    <location>
        <position position="44"/>
    </location>
</feature>
<feature type="mutagenesis site" description="Loss of magnesium, alters ds-RNA binding, loss of activity." evidence="4 7">
    <original>E</original>
    <variation>K</variation>
    <location>
        <position position="110"/>
    </location>
</feature>
<feature type="mutagenesis site" description="No RNase activity, no RNA binding." evidence="8">
    <original>Q</original>
    <variation>A</variation>
    <location>
        <position position="157"/>
    </location>
</feature>
<feature type="turn" evidence="13">
    <location>
        <begin position="1"/>
        <end position="3"/>
    </location>
</feature>
<feature type="helix" evidence="15">
    <location>
        <begin position="4"/>
        <end position="11"/>
    </location>
</feature>
<feature type="helix" evidence="15">
    <location>
        <begin position="18"/>
        <end position="25"/>
    </location>
</feature>
<feature type="turn" evidence="15">
    <location>
        <begin position="28"/>
        <end position="30"/>
    </location>
</feature>
<feature type="strand" evidence="15">
    <location>
        <begin position="32"/>
        <end position="34"/>
    </location>
</feature>
<feature type="helix" evidence="15">
    <location>
        <begin position="37"/>
        <end position="57"/>
    </location>
</feature>
<feature type="helix" evidence="15">
    <location>
        <begin position="64"/>
        <end position="74"/>
    </location>
</feature>
<feature type="helix" evidence="15">
    <location>
        <begin position="77"/>
        <end position="85"/>
    </location>
</feature>
<feature type="turn" evidence="15">
    <location>
        <begin position="86"/>
        <end position="88"/>
    </location>
</feature>
<feature type="helix" evidence="15">
    <location>
        <begin position="89"/>
        <end position="91"/>
    </location>
</feature>
<feature type="strand" evidence="14">
    <location>
        <begin position="96"/>
        <end position="98"/>
    </location>
</feature>
<feature type="helix" evidence="15">
    <location>
        <begin position="102"/>
        <end position="119"/>
    </location>
</feature>
<feature type="helix" evidence="15">
    <location>
        <begin position="124"/>
        <end position="144"/>
    </location>
</feature>
<feature type="helix" evidence="15">
    <location>
        <begin position="152"/>
        <end position="164"/>
    </location>
</feature>
<feature type="strand" evidence="15">
    <location>
        <begin position="169"/>
        <end position="177"/>
    </location>
</feature>
<feature type="helix" evidence="15">
    <location>
        <begin position="179"/>
        <end position="181"/>
    </location>
</feature>
<feature type="strand" evidence="15">
    <location>
        <begin position="183"/>
        <end position="190"/>
    </location>
</feature>
<feature type="strand" evidence="15">
    <location>
        <begin position="193"/>
        <end position="201"/>
    </location>
</feature>
<feature type="helix" evidence="15">
    <location>
        <begin position="202"/>
        <end position="217"/>
    </location>
</feature>
<name>RNC_AQUAE</name>
<reference key="1">
    <citation type="journal article" date="1998" name="Nature">
        <title>The complete genome of the hyperthermophilic bacterium Aquifex aeolicus.</title>
        <authorList>
            <person name="Deckert G."/>
            <person name="Warren P.V."/>
            <person name="Gaasterland T."/>
            <person name="Young W.G."/>
            <person name="Lenox A.L."/>
            <person name="Graham D.E."/>
            <person name="Overbeek R."/>
            <person name="Snead M.A."/>
            <person name="Keller M."/>
            <person name="Aujay M."/>
            <person name="Huber R."/>
            <person name="Feldman R.A."/>
            <person name="Short J.M."/>
            <person name="Olsen G.J."/>
            <person name="Swanson R.V."/>
        </authorList>
    </citation>
    <scope>NUCLEOTIDE SEQUENCE [LARGE SCALE GENOMIC DNA]</scope>
    <source>
        <strain>VF5</strain>
    </source>
</reference>
<reference key="2">
    <citation type="journal article" date="2011" name="Nucleic Acids Res.">
        <title>Characterization of Aquifex aeolicus ribonuclease III and the reactivity epitopes of its pre-ribosomal RNA substrates.</title>
        <authorList>
            <person name="Shi Z."/>
            <person name="Nicholson R.H."/>
            <person name="Jaggi R."/>
            <person name="Nicholson A.W."/>
        </authorList>
    </citation>
    <scope>BIOPHYSICOCHEMICAL PROPERTIES</scope>
    <scope>FUNCTION AS AN ENDORIBONUCLEASE</scope>
    <scope>FUNCTION IN RRNA PRECURSOR PROCESSING</scope>
    <scope>COFACTOR</scope>
    <scope>RNA-BINDING</scope>
    <scope>MUTAGENESIS OF GLN-157</scope>
</reference>
<reference key="3">
    <citation type="journal article" date="2001" name="Structure">
        <title>Crystallographic and modeling studies of RNase III suggest a mechanism for double-stranded RNA cleavage.</title>
        <authorList>
            <person name="Blaszczyk J."/>
            <person name="Tropea J.E."/>
            <person name="Bubunenko M."/>
            <person name="Routzahn K.M."/>
            <person name="Waugh D.S."/>
            <person name="Court D.L."/>
            <person name="Ji X."/>
        </authorList>
    </citation>
    <scope>X-RAY CRYSTALLOGRAPHY (2.1 ANGSTROMS) OF 1-147 WITH AND WITHOUT MANGANESE</scope>
    <scope>COFACTOR</scope>
    <scope>SUBUNIT</scope>
    <source>
        <strain>VF5</strain>
    </source>
</reference>
<reference key="4">
    <citation type="journal article" date="2004" name="Structure">
        <title>Noncatalytic assembly of ribonuclease III with double-stranded RNA.</title>
        <authorList>
            <person name="Blaszczyk J."/>
            <person name="Gan J."/>
            <person name="Tropea J.E."/>
            <person name="Court D.L."/>
            <person name="Waugh D.S."/>
            <person name="Ji X."/>
        </authorList>
    </citation>
    <scope>X-RAY CRYSTALLOGRAPHY (2.3 ANGSTROMS) OF 1-147 WITH MAGNESIUM</scope>
    <scope>X-RAY CRYSTALLOGRAPHY (2.15 ANGSTROMS) OF 1-220 WITH DS-RNA</scope>
    <scope>RNA-BINDING</scope>
    <scope>COFACTOR</scope>
    <scope>SUBUNIT</scope>
    <scope>MUTAGENESIS OF GLU-110</scope>
    <source>
        <strain>VF5</strain>
    </source>
</reference>
<reference key="5">
    <citation type="journal article" date="2005" name="Structure">
        <title>Intermediate states of ribonuclease III in complex with double-stranded RNA.</title>
        <authorList>
            <person name="Gan J."/>
            <person name="Tropea J.E."/>
            <person name="Austin B.P."/>
            <person name="Court D.L."/>
            <person name="Waugh D.S."/>
            <person name="Ji X."/>
        </authorList>
    </citation>
    <scope>X-RAY CRYSTALLOGRAPHY (2.1 ANGSTROMS) IN COMPLEX WITH DS-RNA</scope>
</reference>
<reference key="6">
    <citation type="journal article" date="2006" name="Cell">
        <title>Structural insight into the mechanism of double-stranded RNA processing by ribonuclease III.</title>
        <authorList>
            <person name="Gan J."/>
            <person name="Tropea J.E."/>
            <person name="Austin B.P."/>
            <person name="Court D.L."/>
            <person name="Waugh D.S."/>
            <person name="Ji X."/>
        </authorList>
    </citation>
    <scope>X-RAY CRYSTALLOGRAPHY (2.05 ANGSTROMS) IN COMPLEX WITH PRODUCT</scope>
    <scope>FUNCTION AS AN RNASE</scope>
    <scope>COFACTOR</scope>
    <scope>SUBUNIT</scope>
    <scope>RNA-BINDING</scope>
    <scope>MUTAGENESIS OF ASP-44</scope>
</reference>
<reference key="7">
    <citation type="journal article" date="2008" name="Mol. Microbiol.">
        <title>A stepwise model for double-stranded RNA processing by ribonuclease III.</title>
        <authorList>
            <person name="Gan J."/>
            <person name="Shaw G."/>
            <person name="Tropea J.E."/>
            <person name="Waugh D.S."/>
            <person name="Court D.L."/>
            <person name="Ji X."/>
        </authorList>
    </citation>
    <scope>X-RAY CRYSTALLOGRAPHY (1.7 ANGSTROMS) IN COMPLEX WITH PRODUCT AND MAGNESIUM</scope>
    <scope>COFACTOR</scope>
    <scope>MUTAGENESIS OF GLU-110</scope>
</reference>
<proteinExistence type="evidence at protein level"/>